<accession>A8FNU8</accession>
<evidence type="ECO:0000255" key="1">
    <source>
        <dbReference type="HAMAP-Rule" id="MF_00042"/>
    </source>
</evidence>
<evidence type="ECO:0000255" key="2">
    <source>
        <dbReference type="PROSITE-ProRule" id="PRU00408"/>
    </source>
</evidence>
<comment type="function">
    <text evidence="1">Endonuclease that specifically degrades the RNA of RNA-DNA hybrids.</text>
</comment>
<comment type="catalytic activity">
    <reaction evidence="1">
        <text>Endonucleolytic cleavage to 5'-phosphomonoester.</text>
        <dbReference type="EC" id="3.1.26.4"/>
    </reaction>
</comment>
<comment type="cofactor">
    <cofactor evidence="1">
        <name>Mg(2+)</name>
        <dbReference type="ChEBI" id="CHEBI:18420"/>
    </cofactor>
    <text evidence="1">Binds 1 Mg(2+) ion per subunit. May bind a second metal ion at a regulatory site, or after substrate binding.</text>
</comment>
<comment type="subunit">
    <text evidence="1">Monomer.</text>
</comment>
<comment type="subcellular location">
    <subcellularLocation>
        <location evidence="1">Cytoplasm</location>
    </subcellularLocation>
</comment>
<comment type="similarity">
    <text evidence="1">Belongs to the RNase H family.</text>
</comment>
<proteinExistence type="inferred from homology"/>
<dbReference type="EC" id="3.1.26.4" evidence="1"/>
<dbReference type="EMBL" id="CP000814">
    <property type="protein sequence ID" value="ABV53135.1"/>
    <property type="molecule type" value="Genomic_DNA"/>
</dbReference>
<dbReference type="RefSeq" id="WP_002851277.1">
    <property type="nucleotide sequence ID" value="NC_009839.1"/>
</dbReference>
<dbReference type="SMR" id="A8FNU8"/>
<dbReference type="KEGG" id="cju:C8J_1538"/>
<dbReference type="HOGENOM" id="CLU_030894_6_2_7"/>
<dbReference type="GO" id="GO:0005737">
    <property type="term" value="C:cytoplasm"/>
    <property type="evidence" value="ECO:0007669"/>
    <property type="project" value="UniProtKB-SubCell"/>
</dbReference>
<dbReference type="GO" id="GO:0000287">
    <property type="term" value="F:magnesium ion binding"/>
    <property type="evidence" value="ECO:0007669"/>
    <property type="project" value="UniProtKB-UniRule"/>
</dbReference>
<dbReference type="GO" id="GO:0003676">
    <property type="term" value="F:nucleic acid binding"/>
    <property type="evidence" value="ECO:0007669"/>
    <property type="project" value="InterPro"/>
</dbReference>
<dbReference type="GO" id="GO:0004523">
    <property type="term" value="F:RNA-DNA hybrid ribonuclease activity"/>
    <property type="evidence" value="ECO:0007669"/>
    <property type="project" value="UniProtKB-UniRule"/>
</dbReference>
<dbReference type="GO" id="GO:0043137">
    <property type="term" value="P:DNA replication, removal of RNA primer"/>
    <property type="evidence" value="ECO:0007669"/>
    <property type="project" value="TreeGrafter"/>
</dbReference>
<dbReference type="CDD" id="cd09278">
    <property type="entry name" value="RNase_HI_prokaryote_like"/>
    <property type="match status" value="1"/>
</dbReference>
<dbReference type="Gene3D" id="3.30.420.10">
    <property type="entry name" value="Ribonuclease H-like superfamily/Ribonuclease H"/>
    <property type="match status" value="1"/>
</dbReference>
<dbReference type="HAMAP" id="MF_00042">
    <property type="entry name" value="RNase_H"/>
    <property type="match status" value="1"/>
</dbReference>
<dbReference type="InterPro" id="IPR050092">
    <property type="entry name" value="RNase_H"/>
</dbReference>
<dbReference type="InterPro" id="IPR012337">
    <property type="entry name" value="RNaseH-like_sf"/>
</dbReference>
<dbReference type="InterPro" id="IPR002156">
    <property type="entry name" value="RNaseH_domain"/>
</dbReference>
<dbReference type="InterPro" id="IPR036397">
    <property type="entry name" value="RNaseH_sf"/>
</dbReference>
<dbReference type="InterPro" id="IPR022892">
    <property type="entry name" value="RNaseHI"/>
</dbReference>
<dbReference type="NCBIfam" id="NF001236">
    <property type="entry name" value="PRK00203.1"/>
    <property type="match status" value="1"/>
</dbReference>
<dbReference type="PANTHER" id="PTHR10642">
    <property type="entry name" value="RIBONUCLEASE H1"/>
    <property type="match status" value="1"/>
</dbReference>
<dbReference type="PANTHER" id="PTHR10642:SF26">
    <property type="entry name" value="RIBONUCLEASE H1"/>
    <property type="match status" value="1"/>
</dbReference>
<dbReference type="Pfam" id="PF00075">
    <property type="entry name" value="RNase_H"/>
    <property type="match status" value="1"/>
</dbReference>
<dbReference type="SUPFAM" id="SSF53098">
    <property type="entry name" value="Ribonuclease H-like"/>
    <property type="match status" value="1"/>
</dbReference>
<dbReference type="PROSITE" id="PS50879">
    <property type="entry name" value="RNASE_H_1"/>
    <property type="match status" value="1"/>
</dbReference>
<organism>
    <name type="scientific">Campylobacter jejuni subsp. jejuni serotype O:6 (strain 81116 / NCTC 11828)</name>
    <dbReference type="NCBI Taxonomy" id="407148"/>
    <lineage>
        <taxon>Bacteria</taxon>
        <taxon>Pseudomonadati</taxon>
        <taxon>Campylobacterota</taxon>
        <taxon>Epsilonproteobacteria</taxon>
        <taxon>Campylobacterales</taxon>
        <taxon>Campylobacteraceae</taxon>
        <taxon>Campylobacter</taxon>
    </lineage>
</organism>
<name>RNH_CAMJ8</name>
<feature type="chain" id="PRO_0000332574" description="Ribonuclease H">
    <location>
        <begin position="1"/>
        <end position="146"/>
    </location>
</feature>
<feature type="domain" description="RNase H type-1" evidence="2">
    <location>
        <begin position="1"/>
        <end position="136"/>
    </location>
</feature>
<feature type="binding site" evidence="1">
    <location>
        <position position="9"/>
    </location>
    <ligand>
        <name>Mg(2+)</name>
        <dbReference type="ChEBI" id="CHEBI:18420"/>
        <label>1</label>
    </ligand>
</feature>
<feature type="binding site" evidence="1">
    <location>
        <position position="9"/>
    </location>
    <ligand>
        <name>Mg(2+)</name>
        <dbReference type="ChEBI" id="CHEBI:18420"/>
        <label>2</label>
    </ligand>
</feature>
<feature type="binding site" evidence="1">
    <location>
        <position position="47"/>
    </location>
    <ligand>
        <name>Mg(2+)</name>
        <dbReference type="ChEBI" id="CHEBI:18420"/>
        <label>1</label>
    </ligand>
</feature>
<feature type="binding site" evidence="1">
    <location>
        <position position="69"/>
    </location>
    <ligand>
        <name>Mg(2+)</name>
        <dbReference type="ChEBI" id="CHEBI:18420"/>
        <label>1</label>
    </ligand>
</feature>
<feature type="binding site" evidence="1">
    <location>
        <position position="128"/>
    </location>
    <ligand>
        <name>Mg(2+)</name>
        <dbReference type="ChEBI" id="CHEBI:18420"/>
        <label>2</label>
    </ligand>
</feature>
<sequence>MKHIEIYTDGSCLNNPGFGGWAYILRYKEYQKEGFGAEANTTNNRMELMAIIESLKALKEPCEISLFTDSNLMVQSINEWLEGWIKKDFKGKKNIDLWKEYIKVAKSHKIKAFWVKAHNGHLENERCDTLAREAALKIARENDEKH</sequence>
<reference key="1">
    <citation type="journal article" date="2007" name="J. Bacteriol.">
        <title>The complete genome sequence of Campylobacter jejuni strain 81116 (NCTC11828).</title>
        <authorList>
            <person name="Pearson B.M."/>
            <person name="Gaskin D.J.H."/>
            <person name="Segers R.P.A.M."/>
            <person name="Wells J.M."/>
            <person name="Nuijten P.J.M."/>
            <person name="van Vliet A.H.M."/>
        </authorList>
    </citation>
    <scope>NUCLEOTIDE SEQUENCE [LARGE SCALE GENOMIC DNA]</scope>
    <source>
        <strain>81116 / NCTC 11828</strain>
    </source>
</reference>
<gene>
    <name evidence="1" type="primary">rnhA</name>
    <name type="ordered locus">C8J_1538</name>
</gene>
<keyword id="KW-0963">Cytoplasm</keyword>
<keyword id="KW-0255">Endonuclease</keyword>
<keyword id="KW-0378">Hydrolase</keyword>
<keyword id="KW-0460">Magnesium</keyword>
<keyword id="KW-0479">Metal-binding</keyword>
<keyword id="KW-0540">Nuclease</keyword>
<protein>
    <recommendedName>
        <fullName evidence="1">Ribonuclease H</fullName>
        <shortName evidence="1">RNase H</shortName>
        <ecNumber evidence="1">3.1.26.4</ecNumber>
    </recommendedName>
</protein>